<dbReference type="EMBL" id="AB014549">
    <property type="protein sequence ID" value="BAA31624.2"/>
    <property type="status" value="ALT_INIT"/>
    <property type="molecule type" value="mRNA"/>
</dbReference>
<dbReference type="EMBL" id="AL161452">
    <property type="status" value="NOT_ANNOTATED_CDS"/>
    <property type="molecule type" value="Genomic_DNA"/>
</dbReference>
<dbReference type="EMBL" id="BC017511">
    <property type="protein sequence ID" value="AAH17511.1"/>
    <property type="molecule type" value="mRNA"/>
</dbReference>
<dbReference type="EMBL" id="BC047935">
    <property type="protein sequence ID" value="AAH47935.1"/>
    <property type="molecule type" value="mRNA"/>
</dbReference>
<dbReference type="CCDS" id="CCDS6988.1"/>
<dbReference type="PIR" id="T00373">
    <property type="entry name" value="T00373"/>
</dbReference>
<dbReference type="RefSeq" id="NP_055626.3">
    <property type="nucleotide sequence ID" value="NM_014811.3"/>
</dbReference>
<dbReference type="RefSeq" id="XP_005263468.1">
    <property type="nucleotide sequence ID" value="XM_005263411.3"/>
</dbReference>
<dbReference type="RefSeq" id="XP_016870844.1">
    <property type="nucleotide sequence ID" value="XM_017015355.3"/>
</dbReference>
<dbReference type="RefSeq" id="XP_016870845.1">
    <property type="nucleotide sequence ID" value="XM_017015356.3"/>
</dbReference>
<dbReference type="RefSeq" id="XP_016870846.1">
    <property type="nucleotide sequence ID" value="XM_017015357.2"/>
</dbReference>
<dbReference type="RefSeq" id="XP_016870847.1">
    <property type="nucleotide sequence ID" value="XM_017015358.2"/>
</dbReference>
<dbReference type="RefSeq" id="XP_016870848.1">
    <property type="nucleotide sequence ID" value="XM_017015359.1"/>
</dbReference>
<dbReference type="RefSeq" id="XP_016870849.1">
    <property type="nucleotide sequence ID" value="XM_017015360.3"/>
</dbReference>
<dbReference type="RefSeq" id="XP_016870850.1">
    <property type="nucleotide sequence ID" value="XM_017015361.3"/>
</dbReference>
<dbReference type="RefSeq" id="XP_016870851.1">
    <property type="nucleotide sequence ID" value="XM_017015362.3"/>
</dbReference>
<dbReference type="RefSeq" id="XP_024303489.1">
    <property type="nucleotide sequence ID" value="XM_024447721.2"/>
</dbReference>
<dbReference type="RefSeq" id="XP_047280165.1">
    <property type="nucleotide sequence ID" value="XM_047424209.1"/>
</dbReference>
<dbReference type="RefSeq" id="XP_047280166.1">
    <property type="nucleotide sequence ID" value="XM_047424210.1"/>
</dbReference>
<dbReference type="RefSeq" id="XP_047280167.1">
    <property type="nucleotide sequence ID" value="XM_047424211.1"/>
</dbReference>
<dbReference type="RefSeq" id="XP_047280168.1">
    <property type="nucleotide sequence ID" value="XM_047424212.1"/>
</dbReference>
<dbReference type="RefSeq" id="XP_047280169.1">
    <property type="nucleotide sequence ID" value="XM_047424213.1"/>
</dbReference>
<dbReference type="RefSeq" id="XP_047280170.1">
    <property type="nucleotide sequence ID" value="XM_047424214.1"/>
</dbReference>
<dbReference type="RefSeq" id="XP_047280171.1">
    <property type="nucleotide sequence ID" value="XM_047424215.1"/>
</dbReference>
<dbReference type="RefSeq" id="XP_047280172.1">
    <property type="nucleotide sequence ID" value="XM_047424216.1"/>
</dbReference>
<dbReference type="RefSeq" id="XP_047280173.1">
    <property type="nucleotide sequence ID" value="XM_047424217.1"/>
</dbReference>
<dbReference type="RefSeq" id="XP_047280174.1">
    <property type="nucleotide sequence ID" value="XM_047424218.1"/>
</dbReference>
<dbReference type="RefSeq" id="XP_047280175.1">
    <property type="nucleotide sequence ID" value="XM_047424219.1"/>
</dbReference>
<dbReference type="RefSeq" id="XP_047280176.1">
    <property type="nucleotide sequence ID" value="XM_047424220.1"/>
</dbReference>
<dbReference type="RefSeq" id="XP_047280177.1">
    <property type="nucleotide sequence ID" value="XM_047424221.1"/>
</dbReference>
<dbReference type="RefSeq" id="XP_047280178.1">
    <property type="nucleotide sequence ID" value="XM_047424222.1"/>
</dbReference>
<dbReference type="RefSeq" id="XP_047280179.1">
    <property type="nucleotide sequence ID" value="XM_047424223.1"/>
</dbReference>
<dbReference type="RefSeq" id="XP_047280180.1">
    <property type="nucleotide sequence ID" value="XM_047424224.1"/>
</dbReference>
<dbReference type="RefSeq" id="XP_054220317.1">
    <property type="nucleotide sequence ID" value="XM_054364342.1"/>
</dbReference>
<dbReference type="RefSeq" id="XP_054220318.1">
    <property type="nucleotide sequence ID" value="XM_054364343.1"/>
</dbReference>
<dbReference type="RefSeq" id="XP_054220319.1">
    <property type="nucleotide sequence ID" value="XM_054364344.1"/>
</dbReference>
<dbReference type="RefSeq" id="XP_054220320.1">
    <property type="nucleotide sequence ID" value="XM_054364345.1"/>
</dbReference>
<dbReference type="RefSeq" id="XP_054220321.1">
    <property type="nucleotide sequence ID" value="XM_054364346.1"/>
</dbReference>
<dbReference type="RefSeq" id="XP_054220322.1">
    <property type="nucleotide sequence ID" value="XM_054364347.1"/>
</dbReference>
<dbReference type="RefSeq" id="XP_054220323.1">
    <property type="nucleotide sequence ID" value="XM_054364348.1"/>
</dbReference>
<dbReference type="RefSeq" id="XP_054220324.1">
    <property type="nucleotide sequence ID" value="XM_054364349.1"/>
</dbReference>
<dbReference type="RefSeq" id="XP_054220325.1">
    <property type="nucleotide sequence ID" value="XM_054364350.1"/>
</dbReference>
<dbReference type="RefSeq" id="XP_054220326.1">
    <property type="nucleotide sequence ID" value="XM_054364351.1"/>
</dbReference>
<dbReference type="RefSeq" id="XP_054220327.1">
    <property type="nucleotide sequence ID" value="XM_054364352.1"/>
</dbReference>
<dbReference type="RefSeq" id="XP_054220328.1">
    <property type="nucleotide sequence ID" value="XM_054364353.1"/>
</dbReference>
<dbReference type="RefSeq" id="XP_054220329.1">
    <property type="nucleotide sequence ID" value="XM_054364354.1"/>
</dbReference>
<dbReference type="RefSeq" id="XP_054220330.1">
    <property type="nucleotide sequence ID" value="XM_054364355.1"/>
</dbReference>
<dbReference type="RefSeq" id="XP_054220331.1">
    <property type="nucleotide sequence ID" value="XM_054364356.1"/>
</dbReference>
<dbReference type="RefSeq" id="XP_054220332.1">
    <property type="nucleotide sequence ID" value="XM_054364357.1"/>
</dbReference>
<dbReference type="RefSeq" id="XP_054220333.1">
    <property type="nucleotide sequence ID" value="XM_054364358.1"/>
</dbReference>
<dbReference type="RefSeq" id="XP_054220334.1">
    <property type="nucleotide sequence ID" value="XM_054364359.1"/>
</dbReference>
<dbReference type="RefSeq" id="XP_054220335.1">
    <property type="nucleotide sequence ID" value="XM_054364360.1"/>
</dbReference>
<dbReference type="RefSeq" id="XP_054220336.1">
    <property type="nucleotide sequence ID" value="XM_054364361.1"/>
</dbReference>
<dbReference type="RefSeq" id="XP_054220337.1">
    <property type="nucleotide sequence ID" value="XM_054364362.1"/>
</dbReference>
<dbReference type="RefSeq" id="XP_054220338.1">
    <property type="nucleotide sequence ID" value="XM_054364363.1"/>
</dbReference>
<dbReference type="RefSeq" id="XP_054220339.1">
    <property type="nucleotide sequence ID" value="XM_054364364.1"/>
</dbReference>
<dbReference type="RefSeq" id="XP_054220340.1">
    <property type="nucleotide sequence ID" value="XM_054364365.1"/>
</dbReference>
<dbReference type="BioGRID" id="115192">
    <property type="interactions" value="13"/>
</dbReference>
<dbReference type="FunCoup" id="Q5T8A7">
    <property type="interactions" value="171"/>
</dbReference>
<dbReference type="IntAct" id="Q5T8A7">
    <property type="interactions" value="12"/>
</dbReference>
<dbReference type="MINT" id="Q5T8A7"/>
<dbReference type="STRING" id="9606.ENSP00000349274"/>
<dbReference type="GlyGen" id="Q5T8A7">
    <property type="glycosylation" value="4 sites, 1 O-linked glycan (3 sites)"/>
</dbReference>
<dbReference type="iPTMnet" id="Q5T8A7"/>
<dbReference type="PhosphoSitePlus" id="Q5T8A7"/>
<dbReference type="BioMuta" id="PPP1R26"/>
<dbReference type="DMDM" id="74745497"/>
<dbReference type="jPOST" id="Q5T8A7"/>
<dbReference type="MassIVE" id="Q5T8A7"/>
<dbReference type="PaxDb" id="9606-ENSP00000349274"/>
<dbReference type="PeptideAtlas" id="Q5T8A7"/>
<dbReference type="ProteomicsDB" id="64720"/>
<dbReference type="Antibodypedia" id="32039">
    <property type="antibodies" value="11 antibodies from 8 providers"/>
</dbReference>
<dbReference type="DNASU" id="9858"/>
<dbReference type="Ensembl" id="ENST00000356818.7">
    <property type="protein sequence ID" value="ENSP00000349274.2"/>
    <property type="gene ID" value="ENSG00000196422.11"/>
</dbReference>
<dbReference type="Ensembl" id="ENST00000401470.3">
    <property type="protein sequence ID" value="ENSP00000385826.3"/>
    <property type="gene ID" value="ENSG00000196422.11"/>
</dbReference>
<dbReference type="Ensembl" id="ENST00000604351.5">
    <property type="protein sequence ID" value="ENSP00000473820.1"/>
    <property type="gene ID" value="ENSG00000196422.11"/>
</dbReference>
<dbReference type="Ensembl" id="ENST00000605286.5">
    <property type="protein sequence ID" value="ENSP00000474807.1"/>
    <property type="gene ID" value="ENSG00000196422.11"/>
</dbReference>
<dbReference type="Ensembl" id="ENST00000605660.1">
    <property type="protein sequence ID" value="ENSP00000474794.1"/>
    <property type="gene ID" value="ENSG00000196422.11"/>
</dbReference>
<dbReference type="GeneID" id="9858"/>
<dbReference type="KEGG" id="hsa:9858"/>
<dbReference type="MANE-Select" id="ENST00000356818.7">
    <property type="protein sequence ID" value="ENSP00000349274.2"/>
    <property type="RefSeq nucleotide sequence ID" value="NM_014811.5"/>
    <property type="RefSeq protein sequence ID" value="NP_055626.3"/>
</dbReference>
<dbReference type="UCSC" id="uc004cfr.1">
    <property type="organism name" value="human"/>
</dbReference>
<dbReference type="AGR" id="HGNC:29089"/>
<dbReference type="CTD" id="9858"/>
<dbReference type="DisGeNET" id="9858"/>
<dbReference type="GeneCards" id="PPP1R26"/>
<dbReference type="HGNC" id="HGNC:29089">
    <property type="gene designation" value="PPP1R26"/>
</dbReference>
<dbReference type="HPA" id="ENSG00000196422">
    <property type="expression patterns" value="Low tissue specificity"/>
</dbReference>
<dbReference type="MIM" id="614056">
    <property type="type" value="gene"/>
</dbReference>
<dbReference type="neXtProt" id="NX_Q5T8A7"/>
<dbReference type="OpenTargets" id="ENSG00000196422"/>
<dbReference type="PharmGKB" id="PA134869847"/>
<dbReference type="VEuPathDB" id="HostDB:ENSG00000196422"/>
<dbReference type="eggNOG" id="ENOG502QRRS">
    <property type="taxonomic scope" value="Eukaryota"/>
</dbReference>
<dbReference type="GeneTree" id="ENSGT00390000014118"/>
<dbReference type="HOGENOM" id="CLU_007963_1_0_1"/>
<dbReference type="InParanoid" id="Q5T8A7"/>
<dbReference type="OMA" id="PWPSRKA"/>
<dbReference type="OrthoDB" id="9939953at2759"/>
<dbReference type="PAN-GO" id="Q5T8A7">
    <property type="GO annotations" value="0 GO annotations based on evolutionary models"/>
</dbReference>
<dbReference type="PhylomeDB" id="Q5T8A7"/>
<dbReference type="TreeFam" id="TF331544"/>
<dbReference type="PathwayCommons" id="Q5T8A7"/>
<dbReference type="SignaLink" id="Q5T8A7"/>
<dbReference type="BioGRID-ORCS" id="9858">
    <property type="hits" value="17 hits in 1150 CRISPR screens"/>
</dbReference>
<dbReference type="ChiTaRS" id="PPP1R26">
    <property type="organism name" value="human"/>
</dbReference>
<dbReference type="GenomeRNAi" id="9858"/>
<dbReference type="Pharos" id="Q5T8A7">
    <property type="development level" value="Tdark"/>
</dbReference>
<dbReference type="PRO" id="PR:Q5T8A7"/>
<dbReference type="Proteomes" id="UP000005640">
    <property type="component" value="Chromosome 9"/>
</dbReference>
<dbReference type="RNAct" id="Q5T8A7">
    <property type="molecule type" value="protein"/>
</dbReference>
<dbReference type="Bgee" id="ENSG00000196422">
    <property type="expression patterns" value="Expressed in endometrium epithelium and 187 other cell types or tissues"/>
</dbReference>
<dbReference type="GO" id="GO:0005730">
    <property type="term" value="C:nucleolus"/>
    <property type="evidence" value="ECO:0007669"/>
    <property type="project" value="UniProtKB-SubCell"/>
</dbReference>
<dbReference type="GO" id="GO:0004864">
    <property type="term" value="F:protein phosphatase inhibitor activity"/>
    <property type="evidence" value="ECO:0007669"/>
    <property type="project" value="UniProtKB-KW"/>
</dbReference>
<dbReference type="InterPro" id="IPR026130">
    <property type="entry name" value="PPP1R26"/>
</dbReference>
<dbReference type="InterPro" id="IPR031474">
    <property type="entry name" value="PPP1R26_N"/>
</dbReference>
<dbReference type="PANTHER" id="PTHR15724">
    <property type="entry name" value="PROTEIN PHOSPHATASE 1 REGULATORY SUBUNIT 26"/>
    <property type="match status" value="1"/>
</dbReference>
<dbReference type="PANTHER" id="PTHR15724:SF0">
    <property type="entry name" value="PROTEIN PHOSPHATASE 1 REGULATORY SUBUNIT 26"/>
    <property type="match status" value="1"/>
</dbReference>
<dbReference type="Pfam" id="PF15740">
    <property type="entry name" value="PPP1R26_N"/>
    <property type="match status" value="1"/>
</dbReference>
<keyword id="KW-0539">Nucleus</keyword>
<keyword id="KW-0597">Phosphoprotein</keyword>
<keyword id="KW-0650">Protein phosphatase inhibitor</keyword>
<keyword id="KW-1267">Proteomics identification</keyword>
<keyword id="KW-1185">Reference proteome</keyword>
<sequence length="1209" mass="127351">MFLMNASPVVALQSKWEAFGPPGSCRFPRCFSEADEGVESASVSARVQMLISTLQRDGAARGTSDERAAQRGHRAEGCHDARPAAKPTVHKEPPALAVCGLVADFDPMGEEETTDFGPLVLDSDSDDSVDRDIEEAIQEYLKAKSGAAQPGAGGAQPGAAQPSRAAGGGSRCKPEPAHGSAPTALCPPKLVPGSGGGPGSQVGSSKDQGSASPVSVSSDDSFEQSIRAEIEQFLNEKRQHETQKCDGSVEKKPDTNENSAKSLLKSHQEPPTKVVHRQGLLGVQKEFAFRKPPRLAKMNVQPRSLRSKVTTTQENEGSTKPATPCRPSEAAQNKGGIKRSASAARRGKRVMSAAQASEASDSSSDDGIEEAIQLYQLQKTRKEADGDLPQRVQLREERAPDPPAHSTSSATKSALPETHRKTPSKKKLVATKTMDPGPGGLDTDHAPKLLKETKAPPPASPASRSEFVERSSCRADTSAELMCAEAILDISKTILPAPVEGSDGSLSASPLFYSPNVPSRSDGDSSSVDSDDSIEQEIRTFLALKAQSGSLLARGESCPQAAQGPLLPPGLNSQTGGHKTPLSKTPDPLLGCKRKRRGGGHVRPSTPKKMQEVVKDGSQDADHSQGRAEPGHERRDLPIQGKASEALGGEGTARGPGDTRMSQGQGKTDEARRLDEKESSEDKSSSLDSDEDLDTAIKDLLRSKRKLKKRCREPRAACRKKVRFSTAQTHFLEQLGGLRRDWKDRGPPVLKSCLSKSKRDSGEGPGKKPPSVFGSTAERMRQEGAASQDAALAFRVRRPASASASEGNPFPRESQGPAPSPGSLSDDSSSVDSNDSIELEIRKFLAEKAKESVSSSEVQAEGPTALGTGGPARPEVLCRKEPAPPPGVCTRSQRARGVPHLAEGLRGTESAGAQGTAGLFSQGGKGLPAAPARGDPVPPRSTSGGVSAKGLSVSRRNVYVHKDQSPRGAEPAAKSAFGQLPSCATAGTEAGGARGTFHMGCGSPSFLTPSPGAERDAGAQADRTPPWSDFAHQSRLPSPWVLRSEGRDAVWRGGVGSERDKGSEGPARGLPSLPLAGFSPLLSTQLFHFGKGVSWGGRQAGLFSPHLGLPLQGPSFSAFREAQAGPSPVFGSPHLLAKKDGGPWPTRKAQAGLSLHDRRSSGSEESILDLRYRRRVNRDDQEQDALGSDASDFSDTSTEDSGGSSVVKV</sequence>
<comment type="function">
    <text evidence="3 4">Inhibits phosphatase activity of protein phosphatase 1 (PP1) complexes. May positively regulate cell proliferation.</text>
</comment>
<comment type="subunit">
    <text evidence="3 4">Interacts with UTP20 and PPP1CA.</text>
</comment>
<comment type="interaction">
    <interactant intactId="EBI-308500">
        <id>Q5T8A7</id>
    </interactant>
    <interactant intactId="EBI-618309">
        <id>Q08379</id>
        <label>GOLGA2</label>
    </interactant>
    <organismsDiffer>false</organismsDiffer>
    <experiments>3</experiments>
</comment>
<comment type="interaction">
    <interactant intactId="EBI-308500">
        <id>Q5T8A7</id>
    </interactant>
    <interactant intactId="EBI-10961706">
        <id>Q96ED9-2</id>
        <label>HOOK2</label>
    </interactant>
    <organismsDiffer>false</organismsDiffer>
    <experiments>3</experiments>
</comment>
<comment type="interaction">
    <interactant intactId="EBI-308500">
        <id>Q5T8A7</id>
    </interactant>
    <interactant intactId="EBI-357253">
        <id>P62136</id>
        <label>PPP1CA</label>
    </interactant>
    <organismsDiffer>false</organismsDiffer>
    <experiments>2</experiments>
</comment>
<comment type="interaction">
    <interactant intactId="EBI-308500">
        <id>Q5T8A7</id>
    </interactant>
    <interactant intactId="EBI-355744">
        <id>Q12933</id>
        <label>TRAF2</label>
    </interactant>
    <organismsDiffer>false</organismsDiffer>
    <experiments>3</experiments>
</comment>
<comment type="interaction">
    <interactant intactId="EBI-308500">
        <id>Q5T8A7</id>
    </interactant>
    <interactant intactId="EBI-492476">
        <id>Q96RU7</id>
        <label>TRIB3</label>
    </interactant>
    <organismsDiffer>false</organismsDiffer>
    <experiments>3</experiments>
</comment>
<comment type="interaction">
    <interactant intactId="EBI-308500">
        <id>Q5T8A7</id>
    </interactant>
    <interactant intactId="EBI-356062">
        <id>O75691</id>
        <label>UTP20</label>
    </interactant>
    <organismsDiffer>false</organismsDiffer>
    <experiments>4</experiments>
</comment>
<comment type="subcellular location">
    <subcellularLocation>
        <location evidence="3">Nucleus</location>
        <location evidence="3">Nucleolus</location>
    </subcellularLocation>
</comment>
<comment type="tissue specificity">
    <text evidence="3">Ubiquitous in normal tissues. Expressed in numerous adenocarcinoma cell lines.</text>
</comment>
<comment type="sequence caution" evidence="6">
    <conflict type="erroneous initiation">
        <sequence resource="EMBL-CDS" id="BAA31624"/>
    </conflict>
    <text>Extended N-terminus.</text>
</comment>
<gene>
    <name type="primary">PPP1R26</name>
    <name type="synonym">KIAA0649</name>
</gene>
<evidence type="ECO:0000256" key="1">
    <source>
        <dbReference type="SAM" id="MobiDB-lite"/>
    </source>
</evidence>
<evidence type="ECO:0000269" key="2">
    <source>
    </source>
</evidence>
<evidence type="ECO:0000269" key="3">
    <source>
    </source>
</evidence>
<evidence type="ECO:0000269" key="4">
    <source>
    </source>
</evidence>
<evidence type="ECO:0000269" key="5">
    <source>
    </source>
</evidence>
<evidence type="ECO:0000305" key="6"/>
<evidence type="ECO:0007744" key="7">
    <source>
    </source>
</evidence>
<name>PPR26_HUMAN</name>
<feature type="chain" id="PRO_0000309218" description="Protein phosphatase 1 regulatory subunit 26">
    <location>
        <begin position="1"/>
        <end position="1209"/>
    </location>
</feature>
<feature type="region of interest" description="Disordered" evidence="1">
    <location>
        <begin position="57"/>
        <end position="91"/>
    </location>
</feature>
<feature type="region of interest" description="Disordered" evidence="1">
    <location>
        <begin position="145"/>
        <end position="279"/>
    </location>
</feature>
<feature type="region of interest" description="Disordered" evidence="1">
    <location>
        <begin position="291"/>
        <end position="471"/>
    </location>
</feature>
<feature type="region of interest" description="Disordered" evidence="1">
    <location>
        <begin position="501"/>
        <end position="532"/>
    </location>
</feature>
<feature type="region of interest" description="Disordered" evidence="1">
    <location>
        <begin position="555"/>
        <end position="694"/>
    </location>
</feature>
<feature type="region of interest" description="Disordered" evidence="1">
    <location>
        <begin position="733"/>
        <end position="836"/>
    </location>
</feature>
<feature type="region of interest" description="Disordered" evidence="1">
    <location>
        <begin position="848"/>
        <end position="1033"/>
    </location>
</feature>
<feature type="region of interest" description="Disordered" evidence="1">
    <location>
        <begin position="1052"/>
        <end position="1072"/>
    </location>
</feature>
<feature type="region of interest" description="Disordered" evidence="1">
    <location>
        <begin position="1118"/>
        <end position="1209"/>
    </location>
</feature>
<feature type="compositionally biased region" description="Basic and acidic residues" evidence="1">
    <location>
        <begin position="63"/>
        <end position="91"/>
    </location>
</feature>
<feature type="compositionally biased region" description="Low complexity" evidence="1">
    <location>
        <begin position="201"/>
        <end position="219"/>
    </location>
</feature>
<feature type="compositionally biased region" description="Basic and acidic residues" evidence="1">
    <location>
        <begin position="226"/>
        <end position="255"/>
    </location>
</feature>
<feature type="compositionally biased region" description="Polar residues" evidence="1">
    <location>
        <begin position="301"/>
        <end position="321"/>
    </location>
</feature>
<feature type="compositionally biased region" description="Low complexity" evidence="1">
    <location>
        <begin position="352"/>
        <end position="362"/>
    </location>
</feature>
<feature type="compositionally biased region" description="Basic and acidic residues" evidence="1">
    <location>
        <begin position="442"/>
        <end position="454"/>
    </location>
</feature>
<feature type="compositionally biased region" description="Basic and acidic residues" evidence="1">
    <location>
        <begin position="609"/>
        <end position="637"/>
    </location>
</feature>
<feature type="compositionally biased region" description="Basic and acidic residues" evidence="1">
    <location>
        <begin position="667"/>
        <end position="685"/>
    </location>
</feature>
<feature type="compositionally biased region" description="Basic and acidic residues" evidence="1">
    <location>
        <begin position="757"/>
        <end position="766"/>
    </location>
</feature>
<feature type="compositionally biased region" description="Low complexity" evidence="1">
    <location>
        <begin position="821"/>
        <end position="836"/>
    </location>
</feature>
<feature type="compositionally biased region" description="Low complexity" evidence="1">
    <location>
        <begin position="852"/>
        <end position="861"/>
    </location>
</feature>
<feature type="compositionally biased region" description="Low complexity" evidence="1">
    <location>
        <begin position="1187"/>
        <end position="1209"/>
    </location>
</feature>
<feature type="modified residue" description="Phosphoserine" evidence="7">
    <location>
        <position position="1161"/>
    </location>
</feature>
<feature type="sequence variant" id="VAR_036906" description="In dbSNP:rs3748192." evidence="2">
    <original>V</original>
    <variation>A</variation>
    <location>
        <position position="98"/>
    </location>
</feature>
<feature type="sequence variant" id="VAR_036907" description="In dbSNP:rs3928777." evidence="2">
    <original>K</original>
    <variation>E</variation>
    <location>
        <position position="206"/>
    </location>
</feature>
<feature type="sequence variant" id="VAR_036908" description="In dbSNP:rs914644.">
    <original>R</original>
    <variation>K</variation>
    <location>
        <position position="346"/>
    </location>
</feature>
<feature type="sequence variant" id="VAR_036909" description="In dbSNP:rs1808998." evidence="2">
    <original>M</original>
    <variation>T</variation>
    <location>
        <position position="434"/>
    </location>
</feature>
<feature type="sequence variant" id="VAR_036910" description="In dbSNP:rs3748195.">
    <original>R</original>
    <variation>H</variation>
    <location>
        <position position="520"/>
    </location>
</feature>
<feature type="sequence variant" id="VAR_036911" description="In dbSNP:rs17854528." evidence="2">
    <original>G</original>
    <variation>S</variation>
    <location>
        <position position="576"/>
    </location>
</feature>
<feature type="sequence variant" id="VAR_036912" description="In dbSNP:rs2078266." evidence="2 5">
    <original>N</original>
    <variation>D</variation>
    <location>
        <position position="834"/>
    </location>
</feature>
<feature type="sequence conflict" description="In Ref. 4; AAH17511." evidence="6" ref="4">
    <original>S</original>
    <variation>I</variation>
    <location>
        <position position="689"/>
    </location>
</feature>
<protein>
    <recommendedName>
        <fullName>Protein phosphatase 1 regulatory subunit 26</fullName>
    </recommendedName>
</protein>
<proteinExistence type="evidence at protein level"/>
<accession>Q5T8A7</accession>
<accession>Q86WU0</accession>
<accession>Q8WVV0</accession>
<accession>Q9Y4D3</accession>
<reference key="1">
    <citation type="journal article" date="1998" name="DNA Res.">
        <title>Prediction of the coding sequences of unidentified human genes. X. The complete sequences of 100 new cDNA clones from brain which can code for large proteins in vitro.</title>
        <authorList>
            <person name="Ishikawa K."/>
            <person name="Nagase T."/>
            <person name="Suyama M."/>
            <person name="Miyajima N."/>
            <person name="Tanaka A."/>
            <person name="Kotani H."/>
            <person name="Nomura N."/>
            <person name="Ohara O."/>
        </authorList>
    </citation>
    <scope>NUCLEOTIDE SEQUENCE [LARGE SCALE MRNA]</scope>
    <scope>VARIANT ASP-834</scope>
    <source>
        <tissue>Brain</tissue>
    </source>
</reference>
<reference key="2">
    <citation type="submission" date="1998-05" db="EMBL/GenBank/DDBJ databases">
        <authorList>
            <person name="Ohara O."/>
            <person name="Suyama M."/>
            <person name="Nagase T."/>
            <person name="Ishikawa K."/>
        </authorList>
    </citation>
    <scope>SEQUENCE REVISION</scope>
</reference>
<reference key="3">
    <citation type="journal article" date="2004" name="Nature">
        <title>DNA sequence and analysis of human chromosome 9.</title>
        <authorList>
            <person name="Humphray S.J."/>
            <person name="Oliver K."/>
            <person name="Hunt A.R."/>
            <person name="Plumb R.W."/>
            <person name="Loveland J.E."/>
            <person name="Howe K.L."/>
            <person name="Andrews T.D."/>
            <person name="Searle S."/>
            <person name="Hunt S.E."/>
            <person name="Scott C.E."/>
            <person name="Jones M.C."/>
            <person name="Ainscough R."/>
            <person name="Almeida J.P."/>
            <person name="Ambrose K.D."/>
            <person name="Ashwell R.I.S."/>
            <person name="Babbage A.K."/>
            <person name="Babbage S."/>
            <person name="Bagguley C.L."/>
            <person name="Bailey J."/>
            <person name="Banerjee R."/>
            <person name="Barker D.J."/>
            <person name="Barlow K.F."/>
            <person name="Bates K."/>
            <person name="Beasley H."/>
            <person name="Beasley O."/>
            <person name="Bird C.P."/>
            <person name="Bray-Allen S."/>
            <person name="Brown A.J."/>
            <person name="Brown J.Y."/>
            <person name="Burford D."/>
            <person name="Burrill W."/>
            <person name="Burton J."/>
            <person name="Carder C."/>
            <person name="Carter N.P."/>
            <person name="Chapman J.C."/>
            <person name="Chen Y."/>
            <person name="Clarke G."/>
            <person name="Clark S.Y."/>
            <person name="Clee C.M."/>
            <person name="Clegg S."/>
            <person name="Collier R.E."/>
            <person name="Corby N."/>
            <person name="Crosier M."/>
            <person name="Cummings A.T."/>
            <person name="Davies J."/>
            <person name="Dhami P."/>
            <person name="Dunn M."/>
            <person name="Dutta I."/>
            <person name="Dyer L.W."/>
            <person name="Earthrowl M.E."/>
            <person name="Faulkner L."/>
            <person name="Fleming C.J."/>
            <person name="Frankish A."/>
            <person name="Frankland J.A."/>
            <person name="French L."/>
            <person name="Fricker D.G."/>
            <person name="Garner P."/>
            <person name="Garnett J."/>
            <person name="Ghori J."/>
            <person name="Gilbert J.G.R."/>
            <person name="Glison C."/>
            <person name="Grafham D.V."/>
            <person name="Gribble S."/>
            <person name="Griffiths C."/>
            <person name="Griffiths-Jones S."/>
            <person name="Grocock R."/>
            <person name="Guy J."/>
            <person name="Hall R.E."/>
            <person name="Hammond S."/>
            <person name="Harley J.L."/>
            <person name="Harrison E.S.I."/>
            <person name="Hart E.A."/>
            <person name="Heath P.D."/>
            <person name="Henderson C.D."/>
            <person name="Hopkins B.L."/>
            <person name="Howard P.J."/>
            <person name="Howden P.J."/>
            <person name="Huckle E."/>
            <person name="Johnson C."/>
            <person name="Johnson D."/>
            <person name="Joy A.A."/>
            <person name="Kay M."/>
            <person name="Keenan S."/>
            <person name="Kershaw J.K."/>
            <person name="Kimberley A.M."/>
            <person name="King A."/>
            <person name="Knights A."/>
            <person name="Laird G.K."/>
            <person name="Langford C."/>
            <person name="Lawlor S."/>
            <person name="Leongamornlert D.A."/>
            <person name="Leversha M."/>
            <person name="Lloyd C."/>
            <person name="Lloyd D.M."/>
            <person name="Lovell J."/>
            <person name="Martin S."/>
            <person name="Mashreghi-Mohammadi M."/>
            <person name="Matthews L."/>
            <person name="McLaren S."/>
            <person name="McLay K.E."/>
            <person name="McMurray A."/>
            <person name="Milne S."/>
            <person name="Nickerson T."/>
            <person name="Nisbett J."/>
            <person name="Nordsiek G."/>
            <person name="Pearce A.V."/>
            <person name="Peck A.I."/>
            <person name="Porter K.M."/>
            <person name="Pandian R."/>
            <person name="Pelan S."/>
            <person name="Phillimore B."/>
            <person name="Povey S."/>
            <person name="Ramsey Y."/>
            <person name="Rand V."/>
            <person name="Scharfe M."/>
            <person name="Sehra H.K."/>
            <person name="Shownkeen R."/>
            <person name="Sims S.K."/>
            <person name="Skuce C.D."/>
            <person name="Smith M."/>
            <person name="Steward C.A."/>
            <person name="Swarbreck D."/>
            <person name="Sycamore N."/>
            <person name="Tester J."/>
            <person name="Thorpe A."/>
            <person name="Tracey A."/>
            <person name="Tromans A."/>
            <person name="Thomas D.W."/>
            <person name="Wall M."/>
            <person name="Wallis J.M."/>
            <person name="West A.P."/>
            <person name="Whitehead S.L."/>
            <person name="Willey D.L."/>
            <person name="Williams S.A."/>
            <person name="Wilming L."/>
            <person name="Wray P.W."/>
            <person name="Young L."/>
            <person name="Ashurst J.L."/>
            <person name="Coulson A."/>
            <person name="Blocker H."/>
            <person name="Durbin R.M."/>
            <person name="Sulston J.E."/>
            <person name="Hubbard T."/>
            <person name="Jackson M.J."/>
            <person name="Bentley D.R."/>
            <person name="Beck S."/>
            <person name="Rogers J."/>
            <person name="Dunham I."/>
        </authorList>
    </citation>
    <scope>NUCLEOTIDE SEQUENCE [LARGE SCALE GENOMIC DNA]</scope>
</reference>
<reference key="4">
    <citation type="journal article" date="2004" name="Genome Res.">
        <title>The status, quality, and expansion of the NIH full-length cDNA project: the Mammalian Gene Collection (MGC).</title>
        <authorList>
            <consortium name="The MGC Project Team"/>
        </authorList>
    </citation>
    <scope>NUCLEOTIDE SEQUENCE [LARGE SCALE MRNA]</scope>
    <scope>VARIANTS ALA-98; GLU-206; THR-434; SER-576 AND ASP-834</scope>
    <source>
        <tissue>Brain</tissue>
        <tissue>Colon</tissue>
    </source>
</reference>
<reference key="5">
    <citation type="journal article" date="2005" name="Biochem. Biophys. Res. Commun.">
        <title>KIAA0649, a 1A6/DRIM-interacting protein with the oncogenic potential.</title>
        <authorList>
            <person name="Yang L."/>
            <person name="Zhao J."/>
            <person name="Lu W."/>
            <person name="Li Y."/>
            <person name="Du X."/>
            <person name="Ning T."/>
            <person name="Lu G."/>
            <person name="Ke Y."/>
        </authorList>
    </citation>
    <scope>FUNCTION</scope>
    <scope>INTERACTION WITH UTP20</scope>
    <scope>SUBCELLULAR LOCATION</scope>
    <scope>TISSUE SPECIFICITY</scope>
</reference>
<reference key="6">
    <citation type="journal article" date="2009" name="Chem. Biol.">
        <title>Docking motif-guided mapping of the interactome of protein phosphatase-1.</title>
        <authorList>
            <person name="Hendrickx A."/>
            <person name="Beullens M."/>
            <person name="Ceulemans H."/>
            <person name="Den Abt T."/>
            <person name="Van Eynde A."/>
            <person name="Nicolaescu E."/>
            <person name="Lesage B."/>
            <person name="Bollen M."/>
        </authorList>
    </citation>
    <scope>FUNCTION</scope>
    <scope>INTERACTION WITH PPP1CA</scope>
</reference>
<reference key="7">
    <citation type="journal article" date="2013" name="J. Proteome Res.">
        <title>Toward a comprehensive characterization of a human cancer cell phosphoproteome.</title>
        <authorList>
            <person name="Zhou H."/>
            <person name="Di Palma S."/>
            <person name="Preisinger C."/>
            <person name="Peng M."/>
            <person name="Polat A.N."/>
            <person name="Heck A.J."/>
            <person name="Mohammed S."/>
        </authorList>
    </citation>
    <scope>PHOSPHORYLATION [LARGE SCALE ANALYSIS] AT SER-1161</scope>
    <scope>IDENTIFICATION BY MASS SPECTROMETRY [LARGE SCALE ANALYSIS]</scope>
    <source>
        <tissue>Cervix carcinoma</tissue>
    </source>
</reference>
<organism>
    <name type="scientific">Homo sapiens</name>
    <name type="common">Human</name>
    <dbReference type="NCBI Taxonomy" id="9606"/>
    <lineage>
        <taxon>Eukaryota</taxon>
        <taxon>Metazoa</taxon>
        <taxon>Chordata</taxon>
        <taxon>Craniata</taxon>
        <taxon>Vertebrata</taxon>
        <taxon>Euteleostomi</taxon>
        <taxon>Mammalia</taxon>
        <taxon>Eutheria</taxon>
        <taxon>Euarchontoglires</taxon>
        <taxon>Primates</taxon>
        <taxon>Haplorrhini</taxon>
        <taxon>Catarrhini</taxon>
        <taxon>Hominidae</taxon>
        <taxon>Homo</taxon>
    </lineage>
</organism>